<reference key="1">
    <citation type="journal article" date="2004" name="Genome Res.">
        <title>The status, quality, and expansion of the NIH full-length cDNA project: the Mammalian Gene Collection (MGC).</title>
        <authorList>
            <consortium name="The MGC Project Team"/>
        </authorList>
    </citation>
    <scope>NUCLEOTIDE SEQUENCE [LARGE SCALE MRNA]</scope>
    <source>
        <tissue>Ovary</tissue>
    </source>
</reference>
<reference key="2">
    <citation type="journal article" date="1993" name="Mol. Immunol.">
        <title>Rapid isolation and biochemical characterization of rat C1 and C1q.</title>
        <authorList>
            <person name="Wing M.G."/>
            <person name="Seilly D.J."/>
            <person name="Bridgman D.J."/>
            <person name="Harrison R.A."/>
        </authorList>
    </citation>
    <scope>PROTEIN SEQUENCE OF 29-56</scope>
    <scope>SUBCELLULAR LOCATION</scope>
</reference>
<organism>
    <name type="scientific">Rattus norvegicus</name>
    <name type="common">Rat</name>
    <dbReference type="NCBI Taxonomy" id="10116"/>
    <lineage>
        <taxon>Eukaryota</taxon>
        <taxon>Metazoa</taxon>
        <taxon>Chordata</taxon>
        <taxon>Craniata</taxon>
        <taxon>Vertebrata</taxon>
        <taxon>Euteleostomi</taxon>
        <taxon>Mammalia</taxon>
        <taxon>Eutheria</taxon>
        <taxon>Euarchontoglires</taxon>
        <taxon>Glires</taxon>
        <taxon>Rodentia</taxon>
        <taxon>Myomorpha</taxon>
        <taxon>Muroidea</taxon>
        <taxon>Muridae</taxon>
        <taxon>Murinae</taxon>
        <taxon>Rattus</taxon>
    </lineage>
</organism>
<comment type="function">
    <text evidence="1">Core component of the complement C1 complex, a multiprotein complex that initiates the classical pathway of the complement system, a cascade of proteins that leads to phagocytosis and breakdown of pathogens and signaling that strengthens the adaptive immune system. The classical complement pathway is initiated by the C1Q subcomplex of the C1 complex, which specifically binds IgG or IgM immunoglobulins complexed with antigens, forming antigen-antibody complexes on the surface of pathogens: C1QA, together with C1QB and C1QC, specifically recognizes and binds the Fc regions of IgG or IgM via its C1q domain. Immunoglobulin-binding activates the proenzyme C1R, which cleaves C1S, initiating the proteolytic cascade of the complement system. The C1Q subcomplex is activated by a hexamer of IgG complexed with antigens, while it is activated by a pentameric IgM. The C1Q subcomplex also recognizes and binds phosphatidylserine exposed on the surface of cells undergoing programmed cell death, possibly promoting activation of the complement system.</text>
</comment>
<comment type="activity regulation">
    <text evidence="1">The C1Q subcomplex is inhibited by sulfated molecules, such as triterpenoid sulfates, heparan sulfate, or chondroitin sulfates.</text>
</comment>
<comment type="subunit">
    <text evidence="1">Core component of the complement C1 complex, a calcium-dependent complex composed of 1 molecule of the C1Q subcomplex, 2 molecules of C1R and 2 molecules of C1S. The C1Q subcomplex is composed 18 subunits: 3 chains of C1QA, C1QB, and C1QC trimerize to form 6 collagen-like triple helices connected to six globular ligand-recognition modules (C1q domain).</text>
</comment>
<comment type="subcellular location">
    <subcellularLocation>
        <location evidence="4">Secreted</location>
    </subcellularLocation>
    <subcellularLocation>
        <location evidence="1">Cell surface</location>
    </subcellularLocation>
    <text evidence="1">Specifically binds IgG or IgM immunoglobulins complexed with antigens, forming antigen-antibody complexes on the surface of pathogens.</text>
</comment>
<comment type="domain">
    <text evidence="1">The C1q domain is the ligand-recognition domain, which specifically recognizes and binds the Fc regions of IgG or IgM immunoglobulins.</text>
</comment>
<comment type="domain">
    <text evidence="1">The collagen-like domain interacts with C1R and C1S proenzymes.</text>
</comment>
<comment type="PTM">
    <text evidence="1">O-linked glycans consist of Glc-Gal disaccharides bound to the oxygen atom of post-translationally added hydroxyl groups.</text>
</comment>
<gene>
    <name evidence="5 6" type="primary">C1qc</name>
    <name type="synonym">C1qg</name>
</gene>
<accession>P31722</accession>
<accession>Q5RJZ8</accession>
<feature type="signal peptide" evidence="4">
    <location>
        <begin position="1"/>
        <end position="28"/>
    </location>
</feature>
<feature type="chain" id="PRO_0000003526" description="Complement C1q subcomponent subunit C">
    <location>
        <begin position="29"/>
        <end position="245"/>
    </location>
</feature>
<feature type="domain" description="Collagen-like">
    <location>
        <begin position="31"/>
        <end position="112"/>
    </location>
</feature>
<feature type="domain" description="C1q" evidence="2">
    <location>
        <begin position="115"/>
        <end position="245"/>
    </location>
</feature>
<feature type="region of interest" description="Disordered" evidence="3">
    <location>
        <begin position="42"/>
        <end position="119"/>
    </location>
</feature>
<feature type="compositionally biased region" description="Pro residues" evidence="3">
    <location>
        <begin position="98"/>
        <end position="107"/>
    </location>
</feature>
<feature type="modified residue" description="4-hydroxyproline" evidence="1">
    <location>
        <position position="36"/>
    </location>
</feature>
<feature type="modified residue" description="4-hydroxyproline" evidence="1">
    <location>
        <position position="39"/>
    </location>
</feature>
<feature type="modified residue" description="4-hydroxyproline" evidence="1">
    <location>
        <position position="42"/>
    </location>
</feature>
<feature type="modified residue" description="4-hydroxyproline" evidence="1">
    <location>
        <position position="45"/>
    </location>
</feature>
<feature type="modified residue" description="4-hydroxyproline" evidence="1">
    <location>
        <position position="63"/>
    </location>
</feature>
<feature type="modified residue" description="5-hydroxylysine" evidence="1">
    <location>
        <position position="75"/>
    </location>
</feature>
<feature type="modified residue" description="4-hydroxyproline" evidence="1">
    <location>
        <position position="81"/>
    </location>
</feature>
<feature type="modified residue" description="4-hydroxyproline" evidence="1">
    <location>
        <position position="96"/>
    </location>
</feature>
<feature type="modified residue" description="4-hydroxyproline" evidence="1">
    <location>
        <position position="99"/>
    </location>
</feature>
<feature type="modified residue" description="4-hydroxyproline" evidence="1">
    <location>
        <position position="105"/>
    </location>
</feature>
<feature type="glycosylation site" description="O-linked (Gal...) hydroxylysine" evidence="1">
    <location>
        <position position="75"/>
    </location>
</feature>
<feature type="disulfide bond" description="Interchain" evidence="1">
    <location>
        <position position="32"/>
    </location>
</feature>
<feature type="disulfide bond" evidence="1">
    <location>
        <begin position="179"/>
        <end position="193"/>
    </location>
</feature>
<evidence type="ECO:0000250" key="1">
    <source>
        <dbReference type="UniProtKB" id="P02747"/>
    </source>
</evidence>
<evidence type="ECO:0000255" key="2">
    <source>
        <dbReference type="PROSITE-ProRule" id="PRU00368"/>
    </source>
</evidence>
<evidence type="ECO:0000256" key="3">
    <source>
        <dbReference type="SAM" id="MobiDB-lite"/>
    </source>
</evidence>
<evidence type="ECO:0000269" key="4">
    <source>
    </source>
</evidence>
<evidence type="ECO:0000303" key="5">
    <source>
    </source>
</evidence>
<evidence type="ECO:0000312" key="6">
    <source>
        <dbReference type="RGD" id="1306828"/>
    </source>
</evidence>
<dbReference type="EMBL" id="BC086409">
    <property type="protein sequence ID" value="AAH86409.1"/>
    <property type="molecule type" value="mRNA"/>
</dbReference>
<dbReference type="RefSeq" id="NP_001008524.1">
    <property type="nucleotide sequence ID" value="NM_001008524.2"/>
</dbReference>
<dbReference type="SMR" id="P31722"/>
<dbReference type="BioGRID" id="263599">
    <property type="interactions" value="3"/>
</dbReference>
<dbReference type="FunCoup" id="P31722">
    <property type="interactions" value="78"/>
</dbReference>
<dbReference type="IntAct" id="P31722">
    <property type="interactions" value="2"/>
</dbReference>
<dbReference type="MINT" id="P31722"/>
<dbReference type="STRING" id="10116.ENSRNOP00000017065"/>
<dbReference type="GlyGen" id="P31722">
    <property type="glycosylation" value="1 site"/>
</dbReference>
<dbReference type="PhosphoSitePlus" id="P31722"/>
<dbReference type="PaxDb" id="10116-ENSRNOP00000017065"/>
<dbReference type="GeneID" id="362634"/>
<dbReference type="KEGG" id="rno:362634"/>
<dbReference type="UCSC" id="RGD:1306828">
    <property type="organism name" value="rat"/>
</dbReference>
<dbReference type="AGR" id="RGD:1306828"/>
<dbReference type="CTD" id="714"/>
<dbReference type="RGD" id="1306828">
    <property type="gene designation" value="C1qc"/>
</dbReference>
<dbReference type="eggNOG" id="ENOG502RZM2">
    <property type="taxonomic scope" value="Eukaryota"/>
</dbReference>
<dbReference type="HOGENOM" id="CLU_001074_0_2_1"/>
<dbReference type="InParanoid" id="P31722"/>
<dbReference type="OrthoDB" id="81407at9989"/>
<dbReference type="PhylomeDB" id="P31722"/>
<dbReference type="TreeFam" id="TF329591"/>
<dbReference type="Reactome" id="R-RNO-166663">
    <property type="pathway name" value="Initial triggering of complement"/>
</dbReference>
<dbReference type="Reactome" id="R-RNO-173623">
    <property type="pathway name" value="Classical antibody-mediated complement activation"/>
</dbReference>
<dbReference type="Reactome" id="R-RNO-977606">
    <property type="pathway name" value="Regulation of Complement cascade"/>
</dbReference>
<dbReference type="PRO" id="PR:P31722"/>
<dbReference type="Proteomes" id="UP000002494">
    <property type="component" value="Unplaced"/>
</dbReference>
<dbReference type="GO" id="GO:0005581">
    <property type="term" value="C:collagen trimer"/>
    <property type="evidence" value="ECO:0007669"/>
    <property type="project" value="UniProtKB-KW"/>
</dbReference>
<dbReference type="GO" id="GO:0062167">
    <property type="term" value="C:complement component C1q complex"/>
    <property type="evidence" value="ECO:0000266"/>
    <property type="project" value="RGD"/>
</dbReference>
<dbReference type="GO" id="GO:0005576">
    <property type="term" value="C:extracellular region"/>
    <property type="evidence" value="ECO:0000266"/>
    <property type="project" value="RGD"/>
</dbReference>
<dbReference type="GO" id="GO:0098890">
    <property type="term" value="C:extrinsic component of postsynaptic membrane"/>
    <property type="evidence" value="ECO:0000266"/>
    <property type="project" value="RGD"/>
</dbReference>
<dbReference type="GO" id="GO:0098888">
    <property type="term" value="C:extrinsic component of presynaptic membrane"/>
    <property type="evidence" value="ECO:0000266"/>
    <property type="project" value="RGD"/>
</dbReference>
<dbReference type="GO" id="GO:0098978">
    <property type="term" value="C:glutamatergic synapse"/>
    <property type="evidence" value="ECO:0000266"/>
    <property type="project" value="RGD"/>
</dbReference>
<dbReference type="GO" id="GO:0098794">
    <property type="term" value="C:postsynapse"/>
    <property type="evidence" value="ECO:0000266"/>
    <property type="project" value="RGD"/>
</dbReference>
<dbReference type="GO" id="GO:0045202">
    <property type="term" value="C:synapse"/>
    <property type="evidence" value="ECO:0000314"/>
    <property type="project" value="ARUK-UCL"/>
</dbReference>
<dbReference type="GO" id="GO:0006958">
    <property type="term" value="P:complement activation, classical pathway"/>
    <property type="evidence" value="ECO:0000266"/>
    <property type="project" value="RGD"/>
</dbReference>
<dbReference type="GO" id="GO:0045087">
    <property type="term" value="P:innate immune response"/>
    <property type="evidence" value="ECO:0007669"/>
    <property type="project" value="UniProtKB-KW"/>
</dbReference>
<dbReference type="GO" id="GO:0030853">
    <property type="term" value="P:negative regulation of granulocyte differentiation"/>
    <property type="evidence" value="ECO:0000266"/>
    <property type="project" value="RGD"/>
</dbReference>
<dbReference type="GO" id="GO:0045650">
    <property type="term" value="P:negative regulation of macrophage differentiation"/>
    <property type="evidence" value="ECO:0000266"/>
    <property type="project" value="RGD"/>
</dbReference>
<dbReference type="GO" id="GO:0098883">
    <property type="term" value="P:synapse pruning"/>
    <property type="evidence" value="ECO:0000266"/>
    <property type="project" value="RGD"/>
</dbReference>
<dbReference type="FunFam" id="2.60.120.40:FF:000001">
    <property type="entry name" value="Complement C1q B chain"/>
    <property type="match status" value="1"/>
</dbReference>
<dbReference type="Gene3D" id="2.60.120.40">
    <property type="match status" value="1"/>
</dbReference>
<dbReference type="InterPro" id="IPR001073">
    <property type="entry name" value="C1q_dom"/>
</dbReference>
<dbReference type="InterPro" id="IPR008160">
    <property type="entry name" value="Collagen"/>
</dbReference>
<dbReference type="InterPro" id="IPR050392">
    <property type="entry name" value="Collagen/C1q_domain"/>
</dbReference>
<dbReference type="InterPro" id="IPR008983">
    <property type="entry name" value="Tumour_necrosis_fac-like_dom"/>
</dbReference>
<dbReference type="PANTHER" id="PTHR15427:SF29">
    <property type="entry name" value="COMPLEMENT C1Q SUBCOMPONENT SUBUNIT C"/>
    <property type="match status" value="1"/>
</dbReference>
<dbReference type="PANTHER" id="PTHR15427">
    <property type="entry name" value="EMILIN ELASTIN MICROFIBRIL INTERFACE-LOCATED PROTEIN ELASTIN MICROFIBRIL INTERFACER"/>
    <property type="match status" value="1"/>
</dbReference>
<dbReference type="Pfam" id="PF00386">
    <property type="entry name" value="C1q"/>
    <property type="match status" value="1"/>
</dbReference>
<dbReference type="Pfam" id="PF01391">
    <property type="entry name" value="Collagen"/>
    <property type="match status" value="2"/>
</dbReference>
<dbReference type="PRINTS" id="PR00007">
    <property type="entry name" value="COMPLEMNTC1Q"/>
</dbReference>
<dbReference type="SMART" id="SM00110">
    <property type="entry name" value="C1Q"/>
    <property type="match status" value="1"/>
</dbReference>
<dbReference type="SUPFAM" id="SSF49842">
    <property type="entry name" value="TNF-like"/>
    <property type="match status" value="1"/>
</dbReference>
<dbReference type="PROSITE" id="PS50871">
    <property type="entry name" value="C1Q"/>
    <property type="match status" value="1"/>
</dbReference>
<keyword id="KW-0176">Collagen</keyword>
<keyword id="KW-0180">Complement pathway</keyword>
<keyword id="KW-0903">Direct protein sequencing</keyword>
<keyword id="KW-1015">Disulfide bond</keyword>
<keyword id="KW-0325">Glycoprotein</keyword>
<keyword id="KW-0379">Hydroxylation</keyword>
<keyword id="KW-0391">Immunity</keyword>
<keyword id="KW-0399">Innate immunity</keyword>
<keyword id="KW-1185">Reference proteome</keyword>
<keyword id="KW-0677">Repeat</keyword>
<keyword id="KW-0964">Secreted</keyword>
<keyword id="KW-0732">Signal</keyword>
<sequence>MVVGTSCQPQHGLYLLLLLLALPLRSQANAGCYGIPGMPGLPGTPGKDGHDGLQGPKGEPGIPAIPGTQGPKGQKGEPGMPGHRGKNGPMGTSGSPGDPGPRGPPGEPGEEGRYKQKHQSVFTVTRQTAQYPAANGLVKFNSAITNPQGDYNTNTGKFTCKVPGLYYFVHHTSQTANLCVQLLLNNAKVTSFCDHMSNSKQVSSGGVLLRLQRGDEVWLAVNDYNGMVGTEGSDSVFSGFLLFPD</sequence>
<proteinExistence type="evidence at protein level"/>
<protein>
    <recommendedName>
        <fullName>Complement C1q subcomponent subunit C</fullName>
    </recommendedName>
</protein>
<name>C1QC_RAT</name>